<protein>
    <recommendedName>
        <fullName evidence="1">Uncharacterized protein YEL009C-A</fullName>
    </recommendedName>
</protein>
<feature type="chain" id="PRO_0000430990" description="Uncharacterized protein YEL009C-A">
    <location>
        <begin position="1"/>
        <end position="135"/>
    </location>
</feature>
<name>YE009_YEAST</name>
<gene>
    <name evidence="2" type="ordered locus">YEL009C-A</name>
</gene>
<proteinExistence type="predicted"/>
<reference key="1">
    <citation type="journal article" date="1997" name="Nature">
        <title>The nucleotide sequence of Saccharomyces cerevisiae chromosome V.</title>
        <authorList>
            <person name="Dietrich F.S."/>
            <person name="Mulligan J.T."/>
            <person name="Hennessy K.M."/>
            <person name="Yelton M.A."/>
            <person name="Allen E."/>
            <person name="Araujo R."/>
            <person name="Aviles E."/>
            <person name="Berno A."/>
            <person name="Brennan T."/>
            <person name="Carpenter J."/>
            <person name="Chen E."/>
            <person name="Cherry J.M."/>
            <person name="Chung E."/>
            <person name="Duncan M."/>
            <person name="Guzman E."/>
            <person name="Hartzell G."/>
            <person name="Hunicke-Smith S."/>
            <person name="Hyman R.W."/>
            <person name="Kayser A."/>
            <person name="Komp C."/>
            <person name="Lashkari D."/>
            <person name="Lew H."/>
            <person name="Lin D."/>
            <person name="Mosedale D."/>
            <person name="Nakahara K."/>
            <person name="Namath A."/>
            <person name="Norgren R."/>
            <person name="Oefner P."/>
            <person name="Oh C."/>
            <person name="Petel F.X."/>
            <person name="Roberts D."/>
            <person name="Sehl P."/>
            <person name="Schramm S."/>
            <person name="Shogren T."/>
            <person name="Smith V."/>
            <person name="Taylor P."/>
            <person name="Wei Y."/>
            <person name="Botstein D."/>
            <person name="Davis R.W."/>
        </authorList>
    </citation>
    <scope>NUCLEOTIDE SEQUENCE [LARGE SCALE GENOMIC DNA]</scope>
    <source>
        <strain>ATCC 204508 / S288c</strain>
    </source>
</reference>
<reference key="2">
    <citation type="journal article" date="2014" name="G3 (Bethesda)">
        <title>The reference genome sequence of Saccharomyces cerevisiae: Then and now.</title>
        <authorList>
            <person name="Engel S.R."/>
            <person name="Dietrich F.S."/>
            <person name="Fisk D.G."/>
            <person name="Binkley G."/>
            <person name="Balakrishnan R."/>
            <person name="Costanzo M.C."/>
            <person name="Dwight S.S."/>
            <person name="Hitz B.C."/>
            <person name="Karra K."/>
            <person name="Nash R.S."/>
            <person name="Weng S."/>
            <person name="Wong E.D."/>
            <person name="Lloyd P."/>
            <person name="Skrzypek M.S."/>
            <person name="Miyasato S.R."/>
            <person name="Simison M."/>
            <person name="Cherry J.M."/>
        </authorList>
    </citation>
    <scope>GENOME REANNOTATION</scope>
    <source>
        <strain>ATCC 204508 / S288c</strain>
    </source>
</reference>
<keyword id="KW-1185">Reference proteome</keyword>
<evidence type="ECO:0000305" key="1"/>
<evidence type="ECO:0000312" key="2">
    <source>
        <dbReference type="SGD" id="S000028741"/>
    </source>
</evidence>
<organism>
    <name type="scientific">Saccharomyces cerevisiae (strain ATCC 204508 / S288c)</name>
    <name type="common">Baker's yeast</name>
    <dbReference type="NCBI Taxonomy" id="559292"/>
    <lineage>
        <taxon>Eukaryota</taxon>
        <taxon>Fungi</taxon>
        <taxon>Dikarya</taxon>
        <taxon>Ascomycota</taxon>
        <taxon>Saccharomycotina</taxon>
        <taxon>Saccharomycetes</taxon>
        <taxon>Saccharomycetales</taxon>
        <taxon>Saccharomycetaceae</taxon>
        <taxon>Saccharomyces</taxon>
    </lineage>
</organism>
<sequence>MNTLLKKYRKQRYAWLRFLLFSKIEGSLPVALRILLSLQPFCCNIYRKYYQENKKVKSTSGNTALKIIEKLESLVSNLRLKYSQMFSLLFLHSYNCLQSLATETFRIIKKREKNLLSLLIPGSCIEIARHFVLKE</sequence>
<dbReference type="EMBL" id="KJ412224">
    <property type="protein sequence ID" value="AHX39267.1"/>
    <property type="molecule type" value="Genomic_DNA"/>
</dbReference>
<dbReference type="EMBL" id="BK006939">
    <property type="protein sequence ID" value="DAA80286.1"/>
    <property type="molecule type" value="Genomic_DNA"/>
</dbReference>
<dbReference type="RefSeq" id="NP_001335766.1">
    <property type="nucleotide sequence ID" value="NM_001348822.1"/>
</dbReference>
<dbReference type="SMR" id="A0A023PZF2"/>
<dbReference type="FunCoup" id="A0A023PZF2">
    <property type="interactions" value="1"/>
</dbReference>
<dbReference type="PaxDb" id="4932-YEL009C-A"/>
<dbReference type="PeptideAtlas" id="A0A023PZF2"/>
<dbReference type="EnsemblFungi" id="YEL009C-A_mRNA">
    <property type="protein sequence ID" value="YEL009C-A"/>
    <property type="gene ID" value="YEL009C-A"/>
</dbReference>
<dbReference type="GeneID" id="31009438"/>
<dbReference type="AGR" id="SGD:S000028741"/>
<dbReference type="SGD" id="S000028741">
    <property type="gene designation" value="YEL009C-A"/>
</dbReference>
<dbReference type="HOGENOM" id="CLU_1886934_0_0_1"/>
<dbReference type="InParanoid" id="A0A023PZF2"/>
<dbReference type="PRO" id="PR:A0A023PZF2"/>
<dbReference type="Proteomes" id="UP000002311">
    <property type="component" value="Chromosome V"/>
</dbReference>
<dbReference type="RNAct" id="A0A023PZF2">
    <property type="molecule type" value="protein"/>
</dbReference>
<accession>A0A023PZF2</accession>
<accession>A0A1S0T066</accession>